<dbReference type="EMBL" id="M17559">
    <property type="protein sequence ID" value="AAA34142.1"/>
    <property type="molecule type" value="mRNA"/>
</dbReference>
<dbReference type="PIR" id="S10858">
    <property type="entry name" value="S10858"/>
</dbReference>
<dbReference type="SMR" id="P14279"/>
<dbReference type="STRING" id="4081.P14279"/>
<dbReference type="InParanoid" id="P14279"/>
<dbReference type="Proteomes" id="UP000004994">
    <property type="component" value="Unplaced"/>
</dbReference>
<dbReference type="ExpressionAtlas" id="P14279">
    <property type="expression patterns" value="baseline and differential"/>
</dbReference>
<dbReference type="GO" id="GO:0009535">
    <property type="term" value="C:chloroplast thylakoid membrane"/>
    <property type="evidence" value="ECO:0000318"/>
    <property type="project" value="GO_Central"/>
</dbReference>
<dbReference type="GO" id="GO:0009522">
    <property type="term" value="C:photosystem I"/>
    <property type="evidence" value="ECO:0007669"/>
    <property type="project" value="UniProtKB-KW"/>
</dbReference>
<dbReference type="GO" id="GO:0009523">
    <property type="term" value="C:photosystem II"/>
    <property type="evidence" value="ECO:0007669"/>
    <property type="project" value="UniProtKB-KW"/>
</dbReference>
<dbReference type="GO" id="GO:0016168">
    <property type="term" value="F:chlorophyll binding"/>
    <property type="evidence" value="ECO:0007669"/>
    <property type="project" value="UniProtKB-KW"/>
</dbReference>
<dbReference type="GO" id="GO:0046872">
    <property type="term" value="F:metal ion binding"/>
    <property type="evidence" value="ECO:0007669"/>
    <property type="project" value="UniProtKB-KW"/>
</dbReference>
<dbReference type="GO" id="GO:0009768">
    <property type="term" value="P:photosynthesis, light harvesting in photosystem I"/>
    <property type="evidence" value="ECO:0000318"/>
    <property type="project" value="GO_Central"/>
</dbReference>
<dbReference type="GO" id="GO:0009416">
    <property type="term" value="P:response to light stimulus"/>
    <property type="evidence" value="ECO:0000318"/>
    <property type="project" value="GO_Central"/>
</dbReference>
<dbReference type="FunFam" id="1.10.3460.10:FF:000001">
    <property type="entry name" value="Chlorophyll a-b binding protein, chloroplastic"/>
    <property type="match status" value="1"/>
</dbReference>
<dbReference type="Gene3D" id="1.10.3460.10">
    <property type="entry name" value="Chlorophyll a/b binding protein domain"/>
    <property type="match status" value="1"/>
</dbReference>
<dbReference type="InterPro" id="IPR001344">
    <property type="entry name" value="Chloro_AB-bd_pln"/>
</dbReference>
<dbReference type="InterPro" id="IPR022796">
    <property type="entry name" value="Chloroa_b-bind"/>
</dbReference>
<dbReference type="PANTHER" id="PTHR21649">
    <property type="entry name" value="CHLOROPHYLL A/B BINDING PROTEIN"/>
    <property type="match status" value="1"/>
</dbReference>
<dbReference type="Pfam" id="PF00504">
    <property type="entry name" value="Chloroa_b-bind"/>
    <property type="match status" value="1"/>
</dbReference>
<dbReference type="SUPFAM" id="SSF103511">
    <property type="entry name" value="Chlorophyll a-b binding protein"/>
    <property type="match status" value="1"/>
</dbReference>
<protein>
    <recommendedName>
        <fullName>Chlorophyll a-b binding protein 5, chloroplastic</fullName>
    </recommendedName>
    <alternativeName>
        <fullName>LHCII type I CAB-5</fullName>
        <shortName>LHCP</shortName>
    </alternativeName>
</protein>
<evidence type="ECO:0000250" key="1"/>
<evidence type="ECO:0000250" key="2">
    <source>
        <dbReference type="UniProtKB" id="P07371"/>
    </source>
</evidence>
<evidence type="ECO:0000250" key="3">
    <source>
        <dbReference type="UniProtKB" id="P12333"/>
    </source>
</evidence>
<evidence type="ECO:0000255" key="4"/>
<evidence type="ECO:0000305" key="5"/>
<proteinExistence type="evidence at transcript level"/>
<feature type="transit peptide" description="Chloroplast" evidence="5">
    <location>
        <begin position="1" status="less than"/>
        <end position="9"/>
    </location>
</feature>
<feature type="chain" id="PRO_0000003669" description="Chlorophyll a-b binding protein 5, chloroplastic">
    <location>
        <begin position="10"/>
        <end position="237"/>
    </location>
</feature>
<feature type="transmembrane region" description="Helical" evidence="4">
    <location>
        <begin position="71"/>
        <end position="91"/>
    </location>
</feature>
<feature type="transmembrane region" description="Helical" evidence="4">
    <location>
        <begin position="123"/>
        <end position="143"/>
    </location>
</feature>
<feature type="transmembrane region" description="Helical" evidence="4">
    <location>
        <begin position="191"/>
        <end position="211"/>
    </location>
</feature>
<feature type="binding site" description="axial binding residue" evidence="3">
    <location>
        <position position="29"/>
    </location>
    <ligand>
        <name>chlorophyll b</name>
        <dbReference type="ChEBI" id="CHEBI:61721"/>
        <label>1</label>
    </ligand>
    <ligandPart>
        <name>Mg</name>
        <dbReference type="ChEBI" id="CHEBI:25107"/>
    </ligandPart>
</feature>
<feature type="binding site" evidence="1">
    <location>
        <position position="51"/>
    </location>
    <ligand>
        <name>chlorophyll a</name>
        <dbReference type="ChEBI" id="CHEBI:58416"/>
        <label>1</label>
    </ligand>
</feature>
<feature type="binding site" evidence="1">
    <location>
        <position position="57"/>
    </location>
    <ligand>
        <name>chlorophyll a</name>
        <dbReference type="ChEBI" id="CHEBI:58416"/>
        <label>1</label>
    </ligand>
</feature>
<feature type="binding site" description="axial binding residue" evidence="3">
    <location>
        <position position="70"/>
    </location>
    <ligand>
        <name>chlorophyll a</name>
        <dbReference type="ChEBI" id="CHEBI:58416"/>
        <label>1</label>
    </ligand>
    <ligandPart>
        <name>Mg</name>
        <dbReference type="ChEBI" id="CHEBI:25107"/>
    </ligandPart>
</feature>
<feature type="binding site" description="axial binding residue" evidence="3">
    <location>
        <position position="73"/>
    </location>
    <ligand>
        <name>chlorophyll a</name>
        <dbReference type="ChEBI" id="CHEBI:58416"/>
        <label>2</label>
    </ligand>
    <ligandPart>
        <name>Mg</name>
        <dbReference type="ChEBI" id="CHEBI:25107"/>
    </ligandPart>
</feature>
<feature type="binding site" evidence="1">
    <location>
        <position position="75"/>
    </location>
    <ligand>
        <name>chlorophyll b</name>
        <dbReference type="ChEBI" id="CHEBI:61721"/>
        <label>2</label>
    </ligand>
</feature>
<feature type="binding site" evidence="1">
    <location>
        <position position="108"/>
    </location>
    <ligand>
        <name>chlorophyll a</name>
        <dbReference type="ChEBI" id="CHEBI:58416"/>
        <label>3</label>
    </ligand>
</feature>
<feature type="binding site" evidence="1">
    <location>
        <position position="118"/>
    </location>
    <ligand>
        <name>chlorophyll a</name>
        <dbReference type="ChEBI" id="CHEBI:58416"/>
        <label>3</label>
    </ligand>
</feature>
<feature type="binding site" description="axial binding residue" evidence="1">
    <location>
        <position position="124"/>
    </location>
    <ligand>
        <name>chlorophyll b</name>
        <dbReference type="ChEBI" id="CHEBI:61721"/>
        <label>2</label>
    </ligand>
    <ligandPart>
        <name>Mg</name>
        <dbReference type="ChEBI" id="CHEBI:25107"/>
    </ligandPart>
</feature>
<feature type="binding site" evidence="1">
    <location>
        <position position="128"/>
    </location>
    <ligand>
        <name>chlorophyll b</name>
        <dbReference type="ChEBI" id="CHEBI:61721"/>
        <label>3</label>
    </ligand>
</feature>
<feature type="binding site" evidence="1">
    <location>
        <position position="136"/>
    </location>
    <ligand>
        <name>chlorophyll b</name>
        <dbReference type="ChEBI" id="CHEBI:61721"/>
        <label>4</label>
    </ligand>
</feature>
<feature type="binding site" evidence="2">
    <location>
        <position position="136"/>
    </location>
    <ligand>
        <name>chlorophyll b</name>
        <dbReference type="ChEBI" id="CHEBI:61721"/>
        <label>5</label>
    </ligand>
</feature>
<feature type="binding site" description="axial binding residue" evidence="3">
    <location>
        <position position="144"/>
    </location>
    <ligand>
        <name>chlorophyll b</name>
        <dbReference type="ChEBI" id="CHEBI:61721"/>
        <label>3</label>
    </ligand>
    <ligandPart>
        <name>Mg</name>
        <dbReference type="ChEBI" id="CHEBI:25107"/>
    </ligandPart>
</feature>
<feature type="binding site" evidence="1">
    <location>
        <position position="147"/>
    </location>
    <ligand>
        <name>chlorophyll b</name>
        <dbReference type="ChEBI" id="CHEBI:61721"/>
        <label>4</label>
    </ligand>
</feature>
<feature type="binding site" evidence="1">
    <location>
        <position position="153"/>
    </location>
    <ligand>
        <name>chlorophyll b</name>
        <dbReference type="ChEBI" id="CHEBI:61721"/>
        <label>2</label>
    </ligand>
</feature>
<feature type="binding site" evidence="1">
    <location>
        <position position="184"/>
    </location>
    <ligand>
        <name>chlorophyll a</name>
        <dbReference type="ChEBI" id="CHEBI:58416"/>
        <label>5</label>
    </ligand>
</feature>
<feature type="binding site" description="axial binding residue" evidence="3">
    <location>
        <position position="185"/>
    </location>
    <ligand>
        <name>chlorophyll a</name>
        <dbReference type="ChEBI" id="CHEBI:58416"/>
        <label>3</label>
    </ligand>
    <ligandPart>
        <name>Mg</name>
        <dbReference type="ChEBI" id="CHEBI:25107"/>
    </ligandPart>
</feature>
<feature type="binding site" description="axial binding residue" evidence="3">
    <location>
        <position position="188"/>
    </location>
    <ligand>
        <name>chlorophyll a</name>
        <dbReference type="ChEBI" id="CHEBI:58416"/>
        <label>4</label>
    </ligand>
    <ligandPart>
        <name>Mg</name>
        <dbReference type="ChEBI" id="CHEBI:25107"/>
    </ligandPart>
</feature>
<feature type="binding site" evidence="1">
    <location>
        <position position="190"/>
    </location>
    <ligand>
        <name>chlorophyll a</name>
        <dbReference type="ChEBI" id="CHEBI:58416"/>
        <label>1</label>
    </ligand>
</feature>
<feature type="binding site" description="axial binding residue" evidence="3">
    <location>
        <position position="202"/>
    </location>
    <ligand>
        <name>chlorophyll a</name>
        <dbReference type="ChEBI" id="CHEBI:58416"/>
        <label>5</label>
    </ligand>
    <ligandPart>
        <name>Mg</name>
        <dbReference type="ChEBI" id="CHEBI:25107"/>
    </ligandPart>
</feature>
<feature type="binding site" description="axial binding residue" evidence="3">
    <location>
        <position position="217"/>
    </location>
    <ligand>
        <name>chlorophyll a</name>
        <dbReference type="ChEBI" id="CHEBI:58416"/>
        <label>6</label>
    </ligand>
    <ligandPart>
        <name>Mg</name>
        <dbReference type="ChEBI" id="CHEBI:25107"/>
    </ligandPart>
</feature>
<feature type="binding site" evidence="1">
    <location>
        <position position="226"/>
    </location>
    <ligand>
        <name>chlorophyll a</name>
        <dbReference type="ChEBI" id="CHEBI:58416"/>
        <label>6</label>
    </ligand>
</feature>
<feature type="binding site" evidence="1">
    <location>
        <position position="233"/>
    </location>
    <ligand>
        <name>chlorophyll b</name>
        <dbReference type="ChEBI" id="CHEBI:61721"/>
        <label>5</label>
    </ligand>
</feature>
<feature type="modified residue" description="N2-acetylarginine" evidence="1">
    <location>
        <position position="10"/>
    </location>
</feature>
<feature type="modified residue" description="Phosphothreonine" evidence="1">
    <location>
        <position position="12"/>
    </location>
</feature>
<feature type="non-terminal residue">
    <location>
        <position position="1"/>
    </location>
</feature>
<accession>P14279</accession>
<name>CB25_SOLLC</name>
<sequence>SFEGGRVTMRRTVKSAPQSIWYGEDRPKYLGPFSEQTPSYLTGEFPGDYGWDTAGLSADPETFARNRELEVIHCRWAMLGALGCVFPEILSKNGVTFGEAVWFKAGSQIFSEGGLDYLGNPNLIHAQSILAIWASQVVLMGFVEGYRVGGGPLGEGLDKIYPGGAFDPLGLADDPEAFAELKVKEIKNGRLAMFSMFGFFVQAIVTGKGPIENLSDHIADPVANNAWAYATNFVPGK</sequence>
<reference key="1">
    <citation type="journal article" date="1987" name="Plant Mol. Biol.">
        <title>The tomato Cab-4 and Cab-5 genes encode a second type of CAB polypeptides localized in photosystem II.</title>
        <authorList>
            <person name="Pichersky E."/>
            <person name="Hoffman N.E."/>
            <person name="Malik V.S."/>
            <person name="Bernatzky R."/>
            <person name="Tanksley S.D."/>
            <person name="Szabo L."/>
            <person name="Cashmore A.R."/>
        </authorList>
        <dbReference type="AGRICOLA" id="IND92000041"/>
    </citation>
    <scope>NUCLEOTIDE SEQUENCE [MRNA]</scope>
</reference>
<organism>
    <name type="scientific">Solanum lycopersicum</name>
    <name type="common">Tomato</name>
    <name type="synonym">Lycopersicon esculentum</name>
    <dbReference type="NCBI Taxonomy" id="4081"/>
    <lineage>
        <taxon>Eukaryota</taxon>
        <taxon>Viridiplantae</taxon>
        <taxon>Streptophyta</taxon>
        <taxon>Embryophyta</taxon>
        <taxon>Tracheophyta</taxon>
        <taxon>Spermatophyta</taxon>
        <taxon>Magnoliopsida</taxon>
        <taxon>eudicotyledons</taxon>
        <taxon>Gunneridae</taxon>
        <taxon>Pentapetalae</taxon>
        <taxon>asterids</taxon>
        <taxon>lamiids</taxon>
        <taxon>Solanales</taxon>
        <taxon>Solanaceae</taxon>
        <taxon>Solanoideae</taxon>
        <taxon>Solaneae</taxon>
        <taxon>Solanum</taxon>
        <taxon>Solanum subgen. Lycopersicon</taxon>
    </lineage>
</organism>
<gene>
    <name type="primary">CAB5</name>
</gene>
<keyword id="KW-0007">Acetylation</keyword>
<keyword id="KW-0148">Chlorophyll</keyword>
<keyword id="KW-0150">Chloroplast</keyword>
<keyword id="KW-0157">Chromophore</keyword>
<keyword id="KW-0460">Magnesium</keyword>
<keyword id="KW-0472">Membrane</keyword>
<keyword id="KW-0479">Metal-binding</keyword>
<keyword id="KW-0597">Phosphoprotein</keyword>
<keyword id="KW-0602">Photosynthesis</keyword>
<keyword id="KW-0603">Photosystem I</keyword>
<keyword id="KW-0604">Photosystem II</keyword>
<keyword id="KW-0934">Plastid</keyword>
<keyword id="KW-1185">Reference proteome</keyword>
<keyword id="KW-0793">Thylakoid</keyword>
<keyword id="KW-0809">Transit peptide</keyword>
<keyword id="KW-0812">Transmembrane</keyword>
<keyword id="KW-1133">Transmembrane helix</keyword>
<comment type="function">
    <text>The light-harvesting complex (LHC) functions as a light receptor, it captures and delivers excitation energy to photosystems with which it is closely associated.</text>
</comment>
<comment type="cofactor">
    <text evidence="1">Binds at least 14 chlorophylls (8 Chl-a and 6 Chl-b) and carotenoids such as lutein and neoxanthin.</text>
</comment>
<comment type="subunit">
    <text>The LHC complex consists of chlorophyll a-b binding proteins.</text>
</comment>
<comment type="subcellular location">
    <subcellularLocation>
        <location>Plastid</location>
        <location>Chloroplast thylakoid membrane</location>
        <topology>Multi-pass membrane protein</topology>
    </subcellularLocation>
</comment>
<comment type="domain">
    <text>The N-terminus of the protein extends into the stroma where it is involved with adhesion of granal membranes and post-translational modifications; both are believed to mediate the distribution of excitation energy between photosystems I and II.</text>
</comment>
<comment type="PTM">
    <text evidence="1">Photoregulated by reversible phosphorylation of its threonine residues.</text>
</comment>
<comment type="similarity">
    <text evidence="5">Belongs to the light-harvesting chlorophyll a/b-binding (LHC) protein family.</text>
</comment>